<accession>Q117Z9</accession>
<sequence>MQLSPQEKDKLMIFTAALLAEKRKEKGIKLNYPEAVAYISAAILEGAREGKTVAELMSYGRTVLNQNEVMEGISEMIEEVQVEATFPDGTKLVTVHNPIIIKENDLAE</sequence>
<name>URE3_TRIEI</name>
<keyword id="KW-0963">Cytoplasm</keyword>
<keyword id="KW-0378">Hydrolase</keyword>
<organism>
    <name type="scientific">Trichodesmium erythraeum (strain IMS101)</name>
    <dbReference type="NCBI Taxonomy" id="203124"/>
    <lineage>
        <taxon>Bacteria</taxon>
        <taxon>Bacillati</taxon>
        <taxon>Cyanobacteriota</taxon>
        <taxon>Cyanophyceae</taxon>
        <taxon>Oscillatoriophycideae</taxon>
        <taxon>Oscillatoriales</taxon>
        <taxon>Microcoleaceae</taxon>
        <taxon>Trichodesmium</taxon>
    </lineage>
</organism>
<feature type="chain" id="PRO_1000046375" description="Urease subunit gamma">
    <location>
        <begin position="1"/>
        <end position="108"/>
    </location>
</feature>
<evidence type="ECO:0000255" key="1">
    <source>
        <dbReference type="HAMAP-Rule" id="MF_00739"/>
    </source>
</evidence>
<proteinExistence type="inferred from homology"/>
<gene>
    <name evidence="1" type="primary">ureA</name>
    <name type="ordered locus">Tery_0746</name>
</gene>
<protein>
    <recommendedName>
        <fullName evidence="1">Urease subunit gamma</fullName>
        <ecNumber evidence="1">3.5.1.5</ecNumber>
    </recommendedName>
    <alternativeName>
        <fullName evidence="1">Urea amidohydrolase subunit gamma</fullName>
    </alternativeName>
</protein>
<comment type="catalytic activity">
    <reaction evidence="1">
        <text>urea + 2 H2O + H(+) = hydrogencarbonate + 2 NH4(+)</text>
        <dbReference type="Rhea" id="RHEA:20557"/>
        <dbReference type="ChEBI" id="CHEBI:15377"/>
        <dbReference type="ChEBI" id="CHEBI:15378"/>
        <dbReference type="ChEBI" id="CHEBI:16199"/>
        <dbReference type="ChEBI" id="CHEBI:17544"/>
        <dbReference type="ChEBI" id="CHEBI:28938"/>
        <dbReference type="EC" id="3.5.1.5"/>
    </reaction>
</comment>
<comment type="pathway">
    <text evidence="1">Nitrogen metabolism; urea degradation; CO(2) and NH(3) from urea (urease route): step 1/1.</text>
</comment>
<comment type="subunit">
    <text evidence="1">Heterotrimer of UreA (gamma), UreB (beta) and UreC (alpha) subunits. Three heterotrimers associate to form the active enzyme.</text>
</comment>
<comment type="subcellular location">
    <subcellularLocation>
        <location evidence="1">Cytoplasm</location>
    </subcellularLocation>
</comment>
<comment type="similarity">
    <text evidence="1">Belongs to the urease gamma subunit family.</text>
</comment>
<dbReference type="EC" id="3.5.1.5" evidence="1"/>
<dbReference type="EMBL" id="CP000393">
    <property type="protein sequence ID" value="ABG50175.1"/>
    <property type="molecule type" value="Genomic_DNA"/>
</dbReference>
<dbReference type="RefSeq" id="WP_011610568.1">
    <property type="nucleotide sequence ID" value="NC_008312.1"/>
</dbReference>
<dbReference type="SMR" id="Q117Z9"/>
<dbReference type="STRING" id="203124.Tery_0746"/>
<dbReference type="KEGG" id="ter:Tery_0746"/>
<dbReference type="eggNOG" id="COG0831">
    <property type="taxonomic scope" value="Bacteria"/>
</dbReference>
<dbReference type="HOGENOM" id="CLU_145825_1_0_3"/>
<dbReference type="OrthoDB" id="9793527at2"/>
<dbReference type="UniPathway" id="UPA00258">
    <property type="reaction ID" value="UER00370"/>
</dbReference>
<dbReference type="GO" id="GO:0005737">
    <property type="term" value="C:cytoplasm"/>
    <property type="evidence" value="ECO:0007669"/>
    <property type="project" value="UniProtKB-SubCell"/>
</dbReference>
<dbReference type="GO" id="GO:0016151">
    <property type="term" value="F:nickel cation binding"/>
    <property type="evidence" value="ECO:0007669"/>
    <property type="project" value="InterPro"/>
</dbReference>
<dbReference type="GO" id="GO:0009039">
    <property type="term" value="F:urease activity"/>
    <property type="evidence" value="ECO:0007669"/>
    <property type="project" value="UniProtKB-UniRule"/>
</dbReference>
<dbReference type="GO" id="GO:0043419">
    <property type="term" value="P:urea catabolic process"/>
    <property type="evidence" value="ECO:0007669"/>
    <property type="project" value="UniProtKB-UniRule"/>
</dbReference>
<dbReference type="CDD" id="cd00390">
    <property type="entry name" value="Urease_gamma"/>
    <property type="match status" value="1"/>
</dbReference>
<dbReference type="Gene3D" id="3.30.280.10">
    <property type="entry name" value="Urease, gamma-like subunit"/>
    <property type="match status" value="1"/>
</dbReference>
<dbReference type="HAMAP" id="MF_00739">
    <property type="entry name" value="Urease_gamma"/>
    <property type="match status" value="1"/>
</dbReference>
<dbReference type="InterPro" id="IPR012010">
    <property type="entry name" value="Urease_gamma"/>
</dbReference>
<dbReference type="InterPro" id="IPR002026">
    <property type="entry name" value="Urease_gamma/gamma-beta_su"/>
</dbReference>
<dbReference type="InterPro" id="IPR036463">
    <property type="entry name" value="Urease_gamma_sf"/>
</dbReference>
<dbReference type="InterPro" id="IPR050069">
    <property type="entry name" value="Urease_subunit"/>
</dbReference>
<dbReference type="NCBIfam" id="NF009712">
    <property type="entry name" value="PRK13241.1"/>
    <property type="match status" value="1"/>
</dbReference>
<dbReference type="NCBIfam" id="TIGR00193">
    <property type="entry name" value="urease_gam"/>
    <property type="match status" value="1"/>
</dbReference>
<dbReference type="PANTHER" id="PTHR33569">
    <property type="entry name" value="UREASE"/>
    <property type="match status" value="1"/>
</dbReference>
<dbReference type="PANTHER" id="PTHR33569:SF1">
    <property type="entry name" value="UREASE"/>
    <property type="match status" value="1"/>
</dbReference>
<dbReference type="Pfam" id="PF00547">
    <property type="entry name" value="Urease_gamma"/>
    <property type="match status" value="1"/>
</dbReference>
<dbReference type="PIRSF" id="PIRSF001223">
    <property type="entry name" value="Urease_gamma"/>
    <property type="match status" value="1"/>
</dbReference>
<dbReference type="SUPFAM" id="SSF54111">
    <property type="entry name" value="Urease, gamma-subunit"/>
    <property type="match status" value="1"/>
</dbReference>
<reference key="1">
    <citation type="journal article" date="2015" name="Proc. Natl. Acad. Sci. U.S.A.">
        <title>Trichodesmium genome maintains abundant, widespread noncoding DNA in situ, despite oligotrophic lifestyle.</title>
        <authorList>
            <person name="Walworth N."/>
            <person name="Pfreundt U."/>
            <person name="Nelson W.C."/>
            <person name="Mincer T."/>
            <person name="Heidelberg J.F."/>
            <person name="Fu F."/>
            <person name="Waterbury J.B."/>
            <person name="Glavina del Rio T."/>
            <person name="Goodwin L."/>
            <person name="Kyrpides N.C."/>
            <person name="Land M.L."/>
            <person name="Woyke T."/>
            <person name="Hutchins D.A."/>
            <person name="Hess W.R."/>
            <person name="Webb E.A."/>
        </authorList>
    </citation>
    <scope>NUCLEOTIDE SEQUENCE [LARGE SCALE GENOMIC DNA]</scope>
    <source>
        <strain>IMS101</strain>
    </source>
</reference>